<name>CDPKP_ORYSJ</name>
<gene>
    <name evidence="7" type="primary">CPK25</name>
    <name evidence="8" type="synonym">CK1</name>
    <name evidence="11" type="ordered locus">Os11g0136600</name>
    <name evidence="10" type="ordered locus">LOC_Os11g04170</name>
</gene>
<keyword id="KW-0067">ATP-binding</keyword>
<keyword id="KW-0106">Calcium</keyword>
<keyword id="KW-0418">Kinase</keyword>
<keyword id="KW-0449">Lipoprotein</keyword>
<keyword id="KW-0472">Membrane</keyword>
<keyword id="KW-0479">Metal-binding</keyword>
<keyword id="KW-0519">Myristate</keyword>
<keyword id="KW-0547">Nucleotide-binding</keyword>
<keyword id="KW-1185">Reference proteome</keyword>
<keyword id="KW-0677">Repeat</keyword>
<keyword id="KW-0723">Serine/threonine-protein kinase</keyword>
<keyword id="KW-0808">Transferase</keyword>
<protein>
    <recommendedName>
        <fullName evidence="9">Calcium-dependent protein kinase 25</fullName>
        <shortName evidence="9">OsCDPK25</shortName>
        <shortName evidence="7">OsCPK25</shortName>
        <ecNumber evidence="9">2.7.11.1</ecNumber>
    </recommendedName>
</protein>
<dbReference type="EC" id="2.7.11.1" evidence="9"/>
<dbReference type="EMBL" id="AF319480">
    <property type="protein sequence ID" value="AAQ14593.1"/>
    <property type="molecule type" value="mRNA"/>
</dbReference>
<dbReference type="EMBL" id="AF319481">
    <property type="protein sequence ID" value="AAQ14594.1"/>
    <property type="molecule type" value="Genomic_DNA"/>
</dbReference>
<dbReference type="EMBL" id="DP000010">
    <property type="protein sequence ID" value="ABA91345.1"/>
    <property type="molecule type" value="Genomic_DNA"/>
</dbReference>
<dbReference type="EMBL" id="AP008217">
    <property type="protein sequence ID" value="BAF27536.1"/>
    <property type="molecule type" value="Genomic_DNA"/>
</dbReference>
<dbReference type="EMBL" id="AP014967">
    <property type="protein sequence ID" value="BAT12569.1"/>
    <property type="molecule type" value="Genomic_DNA"/>
</dbReference>
<dbReference type="RefSeq" id="XP_015617738.1">
    <property type="nucleotide sequence ID" value="XM_015762252.1"/>
</dbReference>
<dbReference type="SMR" id="Q2RAV0"/>
<dbReference type="FunCoup" id="Q2RAV0">
    <property type="interactions" value="1702"/>
</dbReference>
<dbReference type="STRING" id="39947.Q2RAV0"/>
<dbReference type="PaxDb" id="39947-Q2RAV0"/>
<dbReference type="EnsemblPlants" id="Os11t0136600-00">
    <property type="protein sequence ID" value="Os11t0136600-00"/>
    <property type="gene ID" value="Os11g0136600"/>
</dbReference>
<dbReference type="Gramene" id="Os11t0136600-00">
    <property type="protein sequence ID" value="Os11t0136600-00"/>
    <property type="gene ID" value="Os11g0136600"/>
</dbReference>
<dbReference type="KEGG" id="dosa:Os11g0136600"/>
<dbReference type="eggNOG" id="KOG0032">
    <property type="taxonomic scope" value="Eukaryota"/>
</dbReference>
<dbReference type="HOGENOM" id="CLU_000288_37_4_1"/>
<dbReference type="InParanoid" id="Q2RAV0"/>
<dbReference type="OMA" id="YWLDMIR"/>
<dbReference type="OrthoDB" id="40902at2759"/>
<dbReference type="Proteomes" id="UP000000763">
    <property type="component" value="Chromosome 11"/>
</dbReference>
<dbReference type="Proteomes" id="UP000059680">
    <property type="component" value="Chromosome 11"/>
</dbReference>
<dbReference type="GO" id="GO:0005737">
    <property type="term" value="C:cytoplasm"/>
    <property type="evidence" value="ECO:0000318"/>
    <property type="project" value="GO_Central"/>
</dbReference>
<dbReference type="GO" id="GO:0016020">
    <property type="term" value="C:membrane"/>
    <property type="evidence" value="ECO:0007669"/>
    <property type="project" value="UniProtKB-SubCell"/>
</dbReference>
<dbReference type="GO" id="GO:0005634">
    <property type="term" value="C:nucleus"/>
    <property type="evidence" value="ECO:0000318"/>
    <property type="project" value="GO_Central"/>
</dbReference>
<dbReference type="GO" id="GO:0005524">
    <property type="term" value="F:ATP binding"/>
    <property type="evidence" value="ECO:0007669"/>
    <property type="project" value="UniProtKB-KW"/>
</dbReference>
<dbReference type="GO" id="GO:0005509">
    <property type="term" value="F:calcium ion binding"/>
    <property type="evidence" value="ECO:0007669"/>
    <property type="project" value="InterPro"/>
</dbReference>
<dbReference type="GO" id="GO:0009931">
    <property type="term" value="F:calcium-dependent protein serine/threonine kinase activity"/>
    <property type="evidence" value="ECO:0000318"/>
    <property type="project" value="GO_Central"/>
</dbReference>
<dbReference type="GO" id="GO:0004683">
    <property type="term" value="F:calcium/calmodulin-dependent protein kinase activity"/>
    <property type="evidence" value="ECO:0000318"/>
    <property type="project" value="GO_Central"/>
</dbReference>
<dbReference type="GO" id="GO:0005516">
    <property type="term" value="F:calmodulin binding"/>
    <property type="evidence" value="ECO:0000318"/>
    <property type="project" value="GO_Central"/>
</dbReference>
<dbReference type="GO" id="GO:0106310">
    <property type="term" value="F:protein serine kinase activity"/>
    <property type="evidence" value="ECO:0007669"/>
    <property type="project" value="RHEA"/>
</dbReference>
<dbReference type="GO" id="GO:0035556">
    <property type="term" value="P:intracellular signal transduction"/>
    <property type="evidence" value="ECO:0000318"/>
    <property type="project" value="GO_Central"/>
</dbReference>
<dbReference type="CDD" id="cd05117">
    <property type="entry name" value="STKc_CAMK"/>
    <property type="match status" value="1"/>
</dbReference>
<dbReference type="FunFam" id="1.10.238.10:FF:000015">
    <property type="entry name" value="Calcium-dependent protein kinase 1"/>
    <property type="match status" value="1"/>
</dbReference>
<dbReference type="FunFam" id="3.30.200.20:FF:000004">
    <property type="entry name" value="Calcium-dependent protein kinase 1"/>
    <property type="match status" value="1"/>
</dbReference>
<dbReference type="FunFam" id="1.10.510.10:FF:000056">
    <property type="entry name" value="calcium-dependent protein kinase 1"/>
    <property type="match status" value="1"/>
</dbReference>
<dbReference type="Gene3D" id="1.10.238.10">
    <property type="entry name" value="EF-hand"/>
    <property type="match status" value="1"/>
</dbReference>
<dbReference type="Gene3D" id="3.30.200.20">
    <property type="entry name" value="Phosphorylase Kinase, domain 1"/>
    <property type="match status" value="1"/>
</dbReference>
<dbReference type="Gene3D" id="1.10.510.10">
    <property type="entry name" value="Transferase(Phosphotransferase) domain 1"/>
    <property type="match status" value="1"/>
</dbReference>
<dbReference type="InterPro" id="IPR050205">
    <property type="entry name" value="CDPK_Ser/Thr_kinases"/>
</dbReference>
<dbReference type="InterPro" id="IPR011992">
    <property type="entry name" value="EF-hand-dom_pair"/>
</dbReference>
<dbReference type="InterPro" id="IPR018247">
    <property type="entry name" value="EF_Hand_1_Ca_BS"/>
</dbReference>
<dbReference type="InterPro" id="IPR002048">
    <property type="entry name" value="EF_hand_dom"/>
</dbReference>
<dbReference type="InterPro" id="IPR011009">
    <property type="entry name" value="Kinase-like_dom_sf"/>
</dbReference>
<dbReference type="InterPro" id="IPR000719">
    <property type="entry name" value="Prot_kinase_dom"/>
</dbReference>
<dbReference type="InterPro" id="IPR017441">
    <property type="entry name" value="Protein_kinase_ATP_BS"/>
</dbReference>
<dbReference type="InterPro" id="IPR008271">
    <property type="entry name" value="Ser/Thr_kinase_AS"/>
</dbReference>
<dbReference type="PANTHER" id="PTHR24349">
    <property type="entry name" value="SERINE/THREONINE-PROTEIN KINASE"/>
    <property type="match status" value="1"/>
</dbReference>
<dbReference type="Pfam" id="PF13499">
    <property type="entry name" value="EF-hand_7"/>
    <property type="match status" value="2"/>
</dbReference>
<dbReference type="Pfam" id="PF00069">
    <property type="entry name" value="Pkinase"/>
    <property type="match status" value="1"/>
</dbReference>
<dbReference type="SMART" id="SM00054">
    <property type="entry name" value="EFh"/>
    <property type="match status" value="4"/>
</dbReference>
<dbReference type="SMART" id="SM00220">
    <property type="entry name" value="S_TKc"/>
    <property type="match status" value="1"/>
</dbReference>
<dbReference type="SUPFAM" id="SSF47473">
    <property type="entry name" value="EF-hand"/>
    <property type="match status" value="1"/>
</dbReference>
<dbReference type="SUPFAM" id="SSF56112">
    <property type="entry name" value="Protein kinase-like (PK-like)"/>
    <property type="match status" value="1"/>
</dbReference>
<dbReference type="PROSITE" id="PS00018">
    <property type="entry name" value="EF_HAND_1"/>
    <property type="match status" value="4"/>
</dbReference>
<dbReference type="PROSITE" id="PS50222">
    <property type="entry name" value="EF_HAND_2"/>
    <property type="match status" value="4"/>
</dbReference>
<dbReference type="PROSITE" id="PS00107">
    <property type="entry name" value="PROTEIN_KINASE_ATP"/>
    <property type="match status" value="1"/>
</dbReference>
<dbReference type="PROSITE" id="PS50011">
    <property type="entry name" value="PROTEIN_KINASE_DOM"/>
    <property type="match status" value="1"/>
</dbReference>
<dbReference type="PROSITE" id="PS00108">
    <property type="entry name" value="PROTEIN_KINASE_ST"/>
    <property type="match status" value="1"/>
</dbReference>
<evidence type="ECO:0000250" key="1">
    <source>
        <dbReference type="UniProtKB" id="Q06850"/>
    </source>
</evidence>
<evidence type="ECO:0000255" key="2"/>
<evidence type="ECO:0000255" key="3">
    <source>
        <dbReference type="PROSITE-ProRule" id="PRU00159"/>
    </source>
</evidence>
<evidence type="ECO:0000255" key="4">
    <source>
        <dbReference type="PROSITE-ProRule" id="PRU00448"/>
    </source>
</evidence>
<evidence type="ECO:0000256" key="5">
    <source>
        <dbReference type="SAM" id="MobiDB-lite"/>
    </source>
</evidence>
<evidence type="ECO:0000269" key="6">
    <source>
    </source>
</evidence>
<evidence type="ECO:0000303" key="7">
    <source>
    </source>
</evidence>
<evidence type="ECO:0000303" key="8">
    <source ref="1"/>
</evidence>
<evidence type="ECO:0000305" key="9"/>
<evidence type="ECO:0000312" key="10">
    <source>
        <dbReference type="EMBL" id="ABA91345.1"/>
    </source>
</evidence>
<evidence type="ECO:0000312" key="11">
    <source>
        <dbReference type="EMBL" id="BAF27536.1"/>
    </source>
</evidence>
<comment type="function">
    <text evidence="1">May play a role in signal transduction pathways that involve calcium as a second messenger.</text>
</comment>
<comment type="catalytic activity">
    <reaction evidence="9">
        <text>L-seryl-[protein] + ATP = O-phospho-L-seryl-[protein] + ADP + H(+)</text>
        <dbReference type="Rhea" id="RHEA:17989"/>
        <dbReference type="Rhea" id="RHEA-COMP:9863"/>
        <dbReference type="Rhea" id="RHEA-COMP:11604"/>
        <dbReference type="ChEBI" id="CHEBI:15378"/>
        <dbReference type="ChEBI" id="CHEBI:29999"/>
        <dbReference type="ChEBI" id="CHEBI:30616"/>
        <dbReference type="ChEBI" id="CHEBI:83421"/>
        <dbReference type="ChEBI" id="CHEBI:456216"/>
        <dbReference type="EC" id="2.7.11.1"/>
    </reaction>
</comment>
<comment type="catalytic activity">
    <reaction evidence="9">
        <text>L-threonyl-[protein] + ATP = O-phospho-L-threonyl-[protein] + ADP + H(+)</text>
        <dbReference type="Rhea" id="RHEA:46608"/>
        <dbReference type="Rhea" id="RHEA-COMP:11060"/>
        <dbReference type="Rhea" id="RHEA-COMP:11605"/>
        <dbReference type="ChEBI" id="CHEBI:15378"/>
        <dbReference type="ChEBI" id="CHEBI:30013"/>
        <dbReference type="ChEBI" id="CHEBI:30616"/>
        <dbReference type="ChEBI" id="CHEBI:61977"/>
        <dbReference type="ChEBI" id="CHEBI:456216"/>
        <dbReference type="EC" id="2.7.11.1"/>
    </reaction>
</comment>
<comment type="activity regulation">
    <text evidence="1">Activated by calcium. Autophosphorylation may play an important role in the regulation of the kinase activity.</text>
</comment>
<comment type="subcellular location">
    <subcellularLocation>
        <location evidence="9">Membrane</location>
        <topology evidence="9">Lipid-anchor</topology>
    </subcellularLocation>
</comment>
<comment type="tissue specificity">
    <text evidence="6">Specifically expressed in heading panicles, spikelets and mature pollen grains. Not expressed in vegetative tissues.</text>
</comment>
<comment type="domain">
    <text evidence="1">There are 3 contiguous domains conserved in the CDPK subfamily: a kinase domain, an autoinhibitory (junction) domain and a calmodulin-like domain. The autoinhibitory domain (347-377) inactivates kinase activity under calcium-free conditions.</text>
</comment>
<comment type="similarity">
    <text evidence="9">Belongs to the protein kinase superfamily. Ser/Thr protein kinase family. CDPK subfamily.</text>
</comment>
<feature type="initiator methionine" description="Removed" evidence="2">
    <location>
        <position position="1"/>
    </location>
</feature>
<feature type="chain" id="PRO_0000437567" description="Calcium-dependent protein kinase 25">
    <location>
        <begin position="2"/>
        <end position="541"/>
    </location>
</feature>
<feature type="domain" description="Protein kinase" evidence="3">
    <location>
        <begin position="83"/>
        <end position="341"/>
    </location>
</feature>
<feature type="domain" description="EF-hand 1" evidence="4">
    <location>
        <begin position="384"/>
        <end position="419"/>
    </location>
</feature>
<feature type="domain" description="EF-hand 2" evidence="4">
    <location>
        <begin position="420"/>
        <end position="455"/>
    </location>
</feature>
<feature type="domain" description="EF-hand 3" evidence="4">
    <location>
        <begin position="456"/>
        <end position="491"/>
    </location>
</feature>
<feature type="domain" description="EF-hand 4" evidence="4">
    <location>
        <begin position="493"/>
        <end position="526"/>
    </location>
</feature>
<feature type="region of interest" description="Disordered" evidence="5">
    <location>
        <begin position="1"/>
        <end position="74"/>
    </location>
</feature>
<feature type="region of interest" description="Autoinhibitory domain" evidence="1">
    <location>
        <begin position="347"/>
        <end position="377"/>
    </location>
</feature>
<feature type="compositionally biased region" description="Gly residues" evidence="5">
    <location>
        <begin position="1"/>
        <end position="11"/>
    </location>
</feature>
<feature type="compositionally biased region" description="Low complexity" evidence="5">
    <location>
        <begin position="38"/>
        <end position="67"/>
    </location>
</feature>
<feature type="active site" description="Proton acceptor" evidence="3">
    <location>
        <position position="207"/>
    </location>
</feature>
<feature type="binding site" evidence="3">
    <location>
        <begin position="89"/>
        <end position="97"/>
    </location>
    <ligand>
        <name>ATP</name>
        <dbReference type="ChEBI" id="CHEBI:30616"/>
    </ligand>
</feature>
<feature type="binding site" evidence="3">
    <location>
        <position position="112"/>
    </location>
    <ligand>
        <name>ATP</name>
        <dbReference type="ChEBI" id="CHEBI:30616"/>
    </ligand>
</feature>
<feature type="binding site" evidence="4">
    <location>
        <position position="397"/>
    </location>
    <ligand>
        <name>Ca(2+)</name>
        <dbReference type="ChEBI" id="CHEBI:29108"/>
        <label>1</label>
    </ligand>
</feature>
<feature type="binding site" evidence="4">
    <location>
        <position position="399"/>
    </location>
    <ligand>
        <name>Ca(2+)</name>
        <dbReference type="ChEBI" id="CHEBI:29108"/>
        <label>1</label>
    </ligand>
</feature>
<feature type="binding site" evidence="4">
    <location>
        <position position="401"/>
    </location>
    <ligand>
        <name>Ca(2+)</name>
        <dbReference type="ChEBI" id="CHEBI:29108"/>
        <label>1</label>
    </ligand>
</feature>
<feature type="binding site" evidence="4">
    <location>
        <position position="403"/>
    </location>
    <ligand>
        <name>Ca(2+)</name>
        <dbReference type="ChEBI" id="CHEBI:29108"/>
        <label>1</label>
    </ligand>
</feature>
<feature type="binding site" evidence="4">
    <location>
        <position position="408"/>
    </location>
    <ligand>
        <name>Ca(2+)</name>
        <dbReference type="ChEBI" id="CHEBI:29108"/>
        <label>1</label>
    </ligand>
</feature>
<feature type="binding site" evidence="4">
    <location>
        <position position="433"/>
    </location>
    <ligand>
        <name>Ca(2+)</name>
        <dbReference type="ChEBI" id="CHEBI:29108"/>
        <label>2</label>
    </ligand>
</feature>
<feature type="binding site" evidence="4">
    <location>
        <position position="435"/>
    </location>
    <ligand>
        <name>Ca(2+)</name>
        <dbReference type="ChEBI" id="CHEBI:29108"/>
        <label>2</label>
    </ligand>
</feature>
<feature type="binding site" evidence="4">
    <location>
        <position position="437"/>
    </location>
    <ligand>
        <name>Ca(2+)</name>
        <dbReference type="ChEBI" id="CHEBI:29108"/>
        <label>2</label>
    </ligand>
</feature>
<feature type="binding site" evidence="4">
    <location>
        <position position="444"/>
    </location>
    <ligand>
        <name>Ca(2+)</name>
        <dbReference type="ChEBI" id="CHEBI:29108"/>
        <label>2</label>
    </ligand>
</feature>
<feature type="binding site" evidence="4">
    <location>
        <position position="469"/>
    </location>
    <ligand>
        <name>Ca(2+)</name>
        <dbReference type="ChEBI" id="CHEBI:29108"/>
        <label>3</label>
    </ligand>
</feature>
<feature type="binding site" evidence="4">
    <location>
        <position position="471"/>
    </location>
    <ligand>
        <name>Ca(2+)</name>
        <dbReference type="ChEBI" id="CHEBI:29108"/>
        <label>3</label>
    </ligand>
</feature>
<feature type="binding site" evidence="4">
    <location>
        <position position="473"/>
    </location>
    <ligand>
        <name>Ca(2+)</name>
        <dbReference type="ChEBI" id="CHEBI:29108"/>
        <label>3</label>
    </ligand>
</feature>
<feature type="binding site" evidence="4">
    <location>
        <position position="475"/>
    </location>
    <ligand>
        <name>Ca(2+)</name>
        <dbReference type="ChEBI" id="CHEBI:29108"/>
        <label>3</label>
    </ligand>
</feature>
<feature type="binding site" evidence="4">
    <location>
        <position position="480"/>
    </location>
    <ligand>
        <name>Ca(2+)</name>
        <dbReference type="ChEBI" id="CHEBI:29108"/>
        <label>3</label>
    </ligand>
</feature>
<feature type="binding site" evidence="4">
    <location>
        <position position="504"/>
    </location>
    <ligand>
        <name>Ca(2+)</name>
        <dbReference type="ChEBI" id="CHEBI:29108"/>
        <label>4</label>
    </ligand>
</feature>
<feature type="binding site" evidence="4">
    <location>
        <position position="506"/>
    </location>
    <ligand>
        <name>Ca(2+)</name>
        <dbReference type="ChEBI" id="CHEBI:29108"/>
        <label>4</label>
    </ligand>
</feature>
<feature type="binding site" evidence="4">
    <location>
        <position position="508"/>
    </location>
    <ligand>
        <name>Ca(2+)</name>
        <dbReference type="ChEBI" id="CHEBI:29108"/>
        <label>4</label>
    </ligand>
</feature>
<feature type="binding site" evidence="4">
    <location>
        <position position="510"/>
    </location>
    <ligand>
        <name>Ca(2+)</name>
        <dbReference type="ChEBI" id="CHEBI:29108"/>
        <label>4</label>
    </ligand>
</feature>
<feature type="binding site" evidence="4">
    <location>
        <position position="515"/>
    </location>
    <ligand>
        <name>Ca(2+)</name>
        <dbReference type="ChEBI" id="CHEBI:29108"/>
        <label>4</label>
    </ligand>
</feature>
<feature type="lipid moiety-binding region" description="N-myristoyl glycine" evidence="2">
    <location>
        <position position="2"/>
    </location>
</feature>
<accession>Q2RAV0</accession>
<accession>Q71S29</accession>
<reference key="1">
    <citation type="submission" date="2000-11" db="EMBL/GenBank/DDBJ databases">
        <title>A rice cDNA encoding a putative calcium-dependent protein kinase is stage-specifically expressed during pollen development.</title>
        <authorList>
            <person name="Lee C.-T."/>
            <person name="Yang J.-Y."/>
            <person name="Leu W.-M."/>
        </authorList>
    </citation>
    <scope>NUCLEOTIDE SEQUENCE [GENOMIC DNA / MRNA]</scope>
</reference>
<reference key="2">
    <citation type="journal article" date="2005" name="BMC Biol.">
        <title>The sequence of rice chromosomes 11 and 12, rich in disease resistance genes and recent gene duplications.</title>
        <authorList>
            <consortium name="The rice chromosomes 11 and 12 sequencing consortia"/>
        </authorList>
    </citation>
    <scope>NUCLEOTIDE SEQUENCE [LARGE SCALE GENOMIC DNA]</scope>
    <source>
        <strain>cv. Nipponbare</strain>
    </source>
</reference>
<reference key="3">
    <citation type="journal article" date="2005" name="Nature">
        <title>The map-based sequence of the rice genome.</title>
        <authorList>
            <consortium name="International rice genome sequencing project (IRGSP)"/>
        </authorList>
    </citation>
    <scope>NUCLEOTIDE SEQUENCE [LARGE SCALE GENOMIC DNA]</scope>
    <source>
        <strain>cv. Nipponbare</strain>
    </source>
</reference>
<reference key="4">
    <citation type="journal article" date="2008" name="Nucleic Acids Res.">
        <title>The rice annotation project database (RAP-DB): 2008 update.</title>
        <authorList>
            <consortium name="The rice annotation project (RAP)"/>
        </authorList>
    </citation>
    <scope>GENOME REANNOTATION</scope>
    <source>
        <strain>cv. Nipponbare</strain>
    </source>
</reference>
<reference key="5">
    <citation type="journal article" date="2013" name="Rice">
        <title>Improvement of the Oryza sativa Nipponbare reference genome using next generation sequence and optical map data.</title>
        <authorList>
            <person name="Kawahara Y."/>
            <person name="de la Bastide M."/>
            <person name="Hamilton J.P."/>
            <person name="Kanamori H."/>
            <person name="McCombie W.R."/>
            <person name="Ouyang S."/>
            <person name="Schwartz D.C."/>
            <person name="Tanaka T."/>
            <person name="Wu J."/>
            <person name="Zhou S."/>
            <person name="Childs K.L."/>
            <person name="Davidson R.M."/>
            <person name="Lin H."/>
            <person name="Quesada-Ocampo L."/>
            <person name="Vaillancourt B."/>
            <person name="Sakai H."/>
            <person name="Lee S.S."/>
            <person name="Kim J."/>
            <person name="Numa H."/>
            <person name="Itoh T."/>
            <person name="Buell C.R."/>
            <person name="Matsumoto T."/>
        </authorList>
    </citation>
    <scope>GENOME REANNOTATION</scope>
    <source>
        <strain>cv. Nipponbare</strain>
    </source>
</reference>
<reference key="6">
    <citation type="journal article" date="2005" name="Plant Cell Physiol.">
        <title>Genome-wide identification of the rice calcium-dependent protein kinase and its closely related kinase gene families: comprehensive analysis of the CDPKs gene family in rice.</title>
        <authorList>
            <person name="Asano T."/>
            <person name="Tanaka N."/>
            <person name="Yang G."/>
            <person name="Hayashi N."/>
            <person name="Komatsu S."/>
        </authorList>
    </citation>
    <scope>GENE FAMILY</scope>
    <scope>NOMENCLATURE</scope>
</reference>
<reference key="7">
    <citation type="journal article" date="2011" name="Plant Cell Physiol.">
        <title>OIP30, a RuvB-like DNA helicase 2, is a potential substrate for the pollen-predominant OsCPK25/26 in rice.</title>
        <authorList>
            <person name="Wang C.W."/>
            <person name="Chen W.C."/>
            <person name="Lin L.J."/>
            <person name="Lee C.T."/>
            <person name="Tseng T.H."/>
            <person name="Leu W.M."/>
        </authorList>
    </citation>
    <scope>TISSUE SPECIFICITY</scope>
</reference>
<organism>
    <name type="scientific">Oryza sativa subsp. japonica</name>
    <name type="common">Rice</name>
    <dbReference type="NCBI Taxonomy" id="39947"/>
    <lineage>
        <taxon>Eukaryota</taxon>
        <taxon>Viridiplantae</taxon>
        <taxon>Streptophyta</taxon>
        <taxon>Embryophyta</taxon>
        <taxon>Tracheophyta</taxon>
        <taxon>Spermatophyta</taxon>
        <taxon>Magnoliopsida</taxon>
        <taxon>Liliopsida</taxon>
        <taxon>Poales</taxon>
        <taxon>Poaceae</taxon>
        <taxon>BOP clade</taxon>
        <taxon>Oryzoideae</taxon>
        <taxon>Oryzeae</taxon>
        <taxon>Oryzinae</taxon>
        <taxon>Oryza</taxon>
        <taxon>Oryza sativa</taxon>
    </lineage>
</organism>
<proteinExistence type="evidence at transcript level"/>
<sequence>MGQCCTGGGKAVAGDEAEPGTSKAAPPSRGTSSKNGSAKQQPCSPAAKAAATEAAAAASSSKKPAGPIGEVLERPMEEVRTTYSIGKELGRGQFGVTHLCTHKATGEKLACKTIAKRKLANKEDVDDVRREVQIMHHLSGQPNIVDLRGAYEDKHNVHLVMELCAGGELFDRIIARGHYTERAAAALLRAIVGIVHTCHSMGVIHRDLKPENFLLLSKGDDAPLKATDFGLSVFFKEGEVFRDIVGSAYYIAPEVLKRKYGPEADIWSIGVMLYIFLAGVPPFWAESENAIFTAILRGQIDLASEPWPKISSGAKDLVRKMLNINPKERLTAFQVLNHPWIKEDGDAPDVPLDNVVLNRLKQFRAMNQFKKAALRIIAGCLSEEEIKGLKEMFKNIDKDNSGTITLEELKNGLAKQGTKFSDNEIEQLMEAADADGNGIIDYEEFVTATVHMNKMDREEHLYTAFQYFDKDNSGYITKEELEQALKEQGLYDANEIKDVITDADSNNDGRIDYSEFVAMMRKGSGCAEATNPKKKRRDLVL</sequence>